<name>RBS6_LEMGI</name>
<sequence length="177" mass="19872">MASSMMASTAAVARVGPAQTNMVAPFNGLRSSVAFPATRKANNDLSTLPSNGGRVSCMQVWPPEGLKKFETLSYLPPLSVEDLAKEVDYLLRNDWVPCIEFSKEGFVYRENHASPGYYDGRYWTMWKLPMFGCTDASQVIAEVEEAKKAYPEYFVRIIGFDNKRQVQCISFIAYKPT</sequence>
<dbReference type="EMBL" id="X17231">
    <property type="protein sequence ID" value="CAA35100.1"/>
    <property type="molecule type" value="Genomic_DNA"/>
</dbReference>
<dbReference type="PIR" id="S11684">
    <property type="entry name" value="RKDWSU"/>
</dbReference>
<dbReference type="SMR" id="P19312"/>
<dbReference type="GO" id="GO:0009507">
    <property type="term" value="C:chloroplast"/>
    <property type="evidence" value="ECO:0007669"/>
    <property type="project" value="UniProtKB-SubCell"/>
</dbReference>
<dbReference type="GO" id="GO:0016984">
    <property type="term" value="F:ribulose-bisphosphate carboxylase activity"/>
    <property type="evidence" value="ECO:0007669"/>
    <property type="project" value="UniProtKB-UniRule"/>
</dbReference>
<dbReference type="GO" id="GO:0009853">
    <property type="term" value="P:photorespiration"/>
    <property type="evidence" value="ECO:0007669"/>
    <property type="project" value="UniProtKB-KW"/>
</dbReference>
<dbReference type="GO" id="GO:0019253">
    <property type="term" value="P:reductive pentose-phosphate cycle"/>
    <property type="evidence" value="ECO:0007669"/>
    <property type="project" value="UniProtKB-UniRule"/>
</dbReference>
<dbReference type="CDD" id="cd03527">
    <property type="entry name" value="RuBisCO_small"/>
    <property type="match status" value="1"/>
</dbReference>
<dbReference type="FunFam" id="3.30.190.10:FF:000001">
    <property type="entry name" value="Ribulose bisphosphate carboxylase small chain, chloroplastic"/>
    <property type="match status" value="1"/>
</dbReference>
<dbReference type="Gene3D" id="3.30.190.10">
    <property type="entry name" value="Ribulose bisphosphate carboxylase, small subunit"/>
    <property type="match status" value="1"/>
</dbReference>
<dbReference type="HAMAP" id="MF_00859">
    <property type="entry name" value="RuBisCO_S_bact"/>
    <property type="match status" value="1"/>
</dbReference>
<dbReference type="InterPro" id="IPR024681">
    <property type="entry name" value="RuBisCO_ssu"/>
</dbReference>
<dbReference type="InterPro" id="IPR000894">
    <property type="entry name" value="RuBisCO_ssu_dom"/>
</dbReference>
<dbReference type="InterPro" id="IPR024680">
    <property type="entry name" value="RuBisCO_ssu_N"/>
</dbReference>
<dbReference type="InterPro" id="IPR036385">
    <property type="entry name" value="RuBisCO_ssu_sf"/>
</dbReference>
<dbReference type="PANTHER" id="PTHR31262">
    <property type="entry name" value="RIBULOSE BISPHOSPHATE CARBOXYLASE SMALL CHAIN 1, CHLOROPLASTIC"/>
    <property type="match status" value="1"/>
</dbReference>
<dbReference type="PANTHER" id="PTHR31262:SF10">
    <property type="entry name" value="RIBULOSE BISPHOSPHATE CARBOXYLASE SMALL SUBUNIT 1A, CHLOROPLASTIC-RELATED"/>
    <property type="match status" value="1"/>
</dbReference>
<dbReference type="Pfam" id="PF12338">
    <property type="entry name" value="RbcS"/>
    <property type="match status" value="1"/>
</dbReference>
<dbReference type="Pfam" id="PF00101">
    <property type="entry name" value="RuBisCO_small"/>
    <property type="match status" value="1"/>
</dbReference>
<dbReference type="PRINTS" id="PR00152">
    <property type="entry name" value="RUBISCOSMALL"/>
</dbReference>
<dbReference type="SMART" id="SM00961">
    <property type="entry name" value="RuBisCO_small"/>
    <property type="match status" value="1"/>
</dbReference>
<dbReference type="SUPFAM" id="SSF55239">
    <property type="entry name" value="RuBisCO, small subunit"/>
    <property type="match status" value="1"/>
</dbReference>
<feature type="transit peptide" description="Chloroplast" evidence="1">
    <location>
        <begin position="1"/>
        <end position="56"/>
    </location>
</feature>
<feature type="chain" id="PRO_0000031517" description="Ribulose bisphosphate carboxylase small subunit, chloroplastic 6" evidence="1">
    <location>
        <begin position="57"/>
        <end position="177"/>
    </location>
</feature>
<comment type="function">
    <text evidence="1">RuBisCO catalyzes two reactions: the carboxylation of D-ribulose 1,5-bisphosphate, the primary event in carbon dioxide fixation, as well as the oxidative fragmentation of the pentose substrate. Both reactions occur simultaneously and in competition at the same active site. Although the small subunit is not catalytic it is essential for maximal activity.</text>
</comment>
<comment type="subunit">
    <text evidence="1">Heterohexadecamer of 8 large and 8 small subunits.</text>
</comment>
<comment type="subcellular location">
    <subcellularLocation>
        <location evidence="1">Plastid</location>
        <location evidence="1">Chloroplast</location>
    </subcellularLocation>
</comment>
<comment type="induction">
    <text evidence="2">Accumulates to medium levels when grown under continuous white light.</text>
</comment>
<comment type="miscellaneous">
    <text>This protein is coded by one member of a small multigene family.</text>
</comment>
<comment type="miscellaneous">
    <text evidence="1">The basic functional RuBisCO is composed of a large chain homodimer in a 'head-to-tail' conformation. In form I RuBisCO this homodimer is arranged in a barrel-like tetramer with the small subunits forming a tetrameric 'cap' on each end of the 'barrel'.</text>
</comment>
<comment type="similarity">
    <text evidence="1">Belongs to the RuBisCO small chain family.</text>
</comment>
<keyword id="KW-0113">Calvin cycle</keyword>
<keyword id="KW-0120">Carbon dioxide fixation</keyword>
<keyword id="KW-0150">Chloroplast</keyword>
<keyword id="KW-0601">Photorespiration</keyword>
<keyword id="KW-0602">Photosynthesis</keyword>
<keyword id="KW-0934">Plastid</keyword>
<keyword id="KW-0809">Transit peptide</keyword>
<organism>
    <name type="scientific">Lemna gibba</name>
    <name type="common">Swollen duckweed</name>
    <dbReference type="NCBI Taxonomy" id="4470"/>
    <lineage>
        <taxon>Eukaryota</taxon>
        <taxon>Viridiplantae</taxon>
        <taxon>Streptophyta</taxon>
        <taxon>Embryophyta</taxon>
        <taxon>Tracheophyta</taxon>
        <taxon>Spermatophyta</taxon>
        <taxon>Magnoliopsida</taxon>
        <taxon>Liliopsida</taxon>
        <taxon>Araceae</taxon>
        <taxon>Lemnoideae</taxon>
        <taxon>Lemna</taxon>
    </lineage>
</organism>
<protein>
    <recommendedName>
        <fullName evidence="1">Ribulose bisphosphate carboxylase small subunit, chloroplastic 6</fullName>
        <shortName evidence="1">RuBisCO small subunit 6</shortName>
        <shortName evidence="3">RuBisCO small subunit SSU5B</shortName>
    </recommendedName>
</protein>
<gene>
    <name evidence="1" type="primary">RBCS6</name>
    <name evidence="3" type="synonym">SSU5B</name>
</gene>
<reference key="1">
    <citation type="journal article" date="1990" name="Plant Mol. Biol.">
        <title>Differential expression of individual genes encoding the small subunit of ribulose-1,5-bisphosphate carboxylase in Lemna gibba.</title>
        <authorList>
            <person name="Silverthorne J."/>
            <person name="Wimpee C.F."/>
            <person name="Yamada T."/>
            <person name="Rolfe S.A."/>
            <person name="Tobin E.M."/>
        </authorList>
    </citation>
    <scope>NUCLEOTIDE SEQUENCE [GENOMIC DNA]</scope>
    <scope>INDUCTION</scope>
</reference>
<proteinExistence type="evidence at transcript level"/>
<accession>P19312</accession>
<evidence type="ECO:0000255" key="1">
    <source>
        <dbReference type="HAMAP-Rule" id="MF_00860"/>
    </source>
</evidence>
<evidence type="ECO:0000269" key="2">
    <source>
    </source>
</evidence>
<evidence type="ECO:0000303" key="3">
    <source>
    </source>
</evidence>